<comment type="function">
    <text evidence="1">Catalyzes the reduction of the glycolytic intermediate dihydroxyacetone phosphate (DHAP) to sn-glycerol 3-phosphate (G3P), the key precursor for phospholipid synthesis.</text>
</comment>
<comment type="catalytic activity">
    <reaction evidence="1">
        <text>sn-glycerol 3-phosphate + NAD(+) = dihydroxyacetone phosphate + NADH + H(+)</text>
        <dbReference type="Rhea" id="RHEA:11092"/>
        <dbReference type="ChEBI" id="CHEBI:15378"/>
        <dbReference type="ChEBI" id="CHEBI:57540"/>
        <dbReference type="ChEBI" id="CHEBI:57597"/>
        <dbReference type="ChEBI" id="CHEBI:57642"/>
        <dbReference type="ChEBI" id="CHEBI:57945"/>
        <dbReference type="EC" id="1.1.1.94"/>
    </reaction>
    <physiologicalReaction direction="right-to-left" evidence="1">
        <dbReference type="Rhea" id="RHEA:11094"/>
    </physiologicalReaction>
</comment>
<comment type="catalytic activity">
    <reaction evidence="1">
        <text>sn-glycerol 3-phosphate + NADP(+) = dihydroxyacetone phosphate + NADPH + H(+)</text>
        <dbReference type="Rhea" id="RHEA:11096"/>
        <dbReference type="ChEBI" id="CHEBI:15378"/>
        <dbReference type="ChEBI" id="CHEBI:57597"/>
        <dbReference type="ChEBI" id="CHEBI:57642"/>
        <dbReference type="ChEBI" id="CHEBI:57783"/>
        <dbReference type="ChEBI" id="CHEBI:58349"/>
        <dbReference type="EC" id="1.1.1.94"/>
    </reaction>
    <physiologicalReaction direction="right-to-left" evidence="1">
        <dbReference type="Rhea" id="RHEA:11098"/>
    </physiologicalReaction>
</comment>
<comment type="pathway">
    <text evidence="1">Membrane lipid metabolism; glycerophospholipid metabolism.</text>
</comment>
<comment type="subcellular location">
    <subcellularLocation>
        <location evidence="1">Cytoplasm</location>
    </subcellularLocation>
</comment>
<comment type="similarity">
    <text evidence="1">Belongs to the NAD-dependent glycerol-3-phosphate dehydrogenase family.</text>
</comment>
<proteinExistence type="inferred from homology"/>
<accession>Q8NWM9</accession>
<protein>
    <recommendedName>
        <fullName evidence="1">Glycerol-3-phosphate dehydrogenase [NAD(P)+]</fullName>
        <ecNumber evidence="1">1.1.1.94</ecNumber>
    </recommendedName>
    <alternativeName>
        <fullName evidence="1">NAD(P)(+)-dependent glycerol-3-phosphate dehydrogenase</fullName>
    </alternativeName>
    <alternativeName>
        <fullName evidence="1">NAD(P)H-dependent dihydroxyacetone-phosphate reductase</fullName>
    </alternativeName>
</protein>
<feature type="chain" id="PRO_0000138028" description="Glycerol-3-phosphate dehydrogenase [NAD(P)+]">
    <location>
        <begin position="1"/>
        <end position="332"/>
    </location>
</feature>
<feature type="active site" description="Proton acceptor" evidence="1">
    <location>
        <position position="192"/>
    </location>
</feature>
<feature type="binding site" evidence="1">
    <location>
        <position position="11"/>
    </location>
    <ligand>
        <name>NADPH</name>
        <dbReference type="ChEBI" id="CHEBI:57783"/>
    </ligand>
</feature>
<feature type="binding site" evidence="1">
    <location>
        <position position="12"/>
    </location>
    <ligand>
        <name>NADPH</name>
        <dbReference type="ChEBI" id="CHEBI:57783"/>
    </ligand>
</feature>
<feature type="binding site" evidence="1">
    <location>
        <position position="32"/>
    </location>
    <ligand>
        <name>NADPH</name>
        <dbReference type="ChEBI" id="CHEBI:57783"/>
    </ligand>
</feature>
<feature type="binding site" evidence="1">
    <location>
        <position position="106"/>
    </location>
    <ligand>
        <name>NADPH</name>
        <dbReference type="ChEBI" id="CHEBI:57783"/>
    </ligand>
</feature>
<feature type="binding site" evidence="1">
    <location>
        <position position="106"/>
    </location>
    <ligand>
        <name>sn-glycerol 3-phosphate</name>
        <dbReference type="ChEBI" id="CHEBI:57597"/>
    </ligand>
</feature>
<feature type="binding site" evidence="1">
    <location>
        <position position="137"/>
    </location>
    <ligand>
        <name>sn-glycerol 3-phosphate</name>
        <dbReference type="ChEBI" id="CHEBI:57597"/>
    </ligand>
</feature>
<feature type="binding site" evidence="1">
    <location>
        <position position="139"/>
    </location>
    <ligand>
        <name>sn-glycerol 3-phosphate</name>
        <dbReference type="ChEBI" id="CHEBI:57597"/>
    </ligand>
</feature>
<feature type="binding site" evidence="1">
    <location>
        <position position="141"/>
    </location>
    <ligand>
        <name>NADPH</name>
        <dbReference type="ChEBI" id="CHEBI:57783"/>
    </ligand>
</feature>
<feature type="binding site" evidence="1">
    <location>
        <position position="192"/>
    </location>
    <ligand>
        <name>sn-glycerol 3-phosphate</name>
        <dbReference type="ChEBI" id="CHEBI:57597"/>
    </ligand>
</feature>
<feature type="binding site" evidence="1">
    <location>
        <position position="245"/>
    </location>
    <ligand>
        <name>sn-glycerol 3-phosphate</name>
        <dbReference type="ChEBI" id="CHEBI:57597"/>
    </ligand>
</feature>
<feature type="binding site" evidence="1">
    <location>
        <position position="255"/>
    </location>
    <ligand>
        <name>sn-glycerol 3-phosphate</name>
        <dbReference type="ChEBI" id="CHEBI:57597"/>
    </ligand>
</feature>
<feature type="binding site" evidence="1">
    <location>
        <position position="256"/>
    </location>
    <ligand>
        <name>NADPH</name>
        <dbReference type="ChEBI" id="CHEBI:57783"/>
    </ligand>
</feature>
<feature type="binding site" evidence="1">
    <location>
        <position position="256"/>
    </location>
    <ligand>
        <name>sn-glycerol 3-phosphate</name>
        <dbReference type="ChEBI" id="CHEBI:57597"/>
    </ligand>
</feature>
<feature type="binding site" evidence="1">
    <location>
        <position position="257"/>
    </location>
    <ligand>
        <name>sn-glycerol 3-phosphate</name>
        <dbReference type="ChEBI" id="CHEBI:57597"/>
    </ligand>
</feature>
<feature type="binding site" evidence="1">
    <location>
        <position position="280"/>
    </location>
    <ligand>
        <name>NADPH</name>
        <dbReference type="ChEBI" id="CHEBI:57783"/>
    </ligand>
</feature>
<feature type="binding site" evidence="1">
    <location>
        <position position="282"/>
    </location>
    <ligand>
        <name>NADPH</name>
        <dbReference type="ChEBI" id="CHEBI:57783"/>
    </ligand>
</feature>
<evidence type="ECO:0000255" key="1">
    <source>
        <dbReference type="HAMAP-Rule" id="MF_00394"/>
    </source>
</evidence>
<gene>
    <name evidence="1" type="primary">gpsA</name>
    <name type="ordered locus">MW1363</name>
</gene>
<reference key="1">
    <citation type="journal article" date="2002" name="Lancet">
        <title>Genome and virulence determinants of high virulence community-acquired MRSA.</title>
        <authorList>
            <person name="Baba T."/>
            <person name="Takeuchi F."/>
            <person name="Kuroda M."/>
            <person name="Yuzawa H."/>
            <person name="Aoki K."/>
            <person name="Oguchi A."/>
            <person name="Nagai Y."/>
            <person name="Iwama N."/>
            <person name="Asano K."/>
            <person name="Naimi T."/>
            <person name="Kuroda H."/>
            <person name="Cui L."/>
            <person name="Yamamoto K."/>
            <person name="Hiramatsu K."/>
        </authorList>
    </citation>
    <scope>NUCLEOTIDE SEQUENCE [LARGE SCALE GENOMIC DNA]</scope>
    <source>
        <strain>MW2</strain>
    </source>
</reference>
<keyword id="KW-0963">Cytoplasm</keyword>
<keyword id="KW-0444">Lipid biosynthesis</keyword>
<keyword id="KW-0443">Lipid metabolism</keyword>
<keyword id="KW-0520">NAD</keyword>
<keyword id="KW-0521">NADP</keyword>
<keyword id="KW-0547">Nucleotide-binding</keyword>
<keyword id="KW-0560">Oxidoreductase</keyword>
<keyword id="KW-0594">Phospholipid biosynthesis</keyword>
<keyword id="KW-1208">Phospholipid metabolism</keyword>
<sequence>MTKITVFGMGSFGTALANVLAENGHDVLMWGKNQDAVDELNTCHTNKKYLKYAKLDVNIIATSDMTKAIQFADIYLMALPTKAMREVASQINDKLTSKKTFIHVAKGIENGTFKRVSEMIEDSISPEYNAGIGVLSGPSHAEEVVVKQPTTVAASSKDKSVSKLTQDLFMNDYLRVYTNDDLIGVELGGALKNIIAVASGIVAGIGYGDNAKAALMTRGLAEISRLGEKLGADPMTFLGLGGIGDLIVTCTSTHSRNFTLGYKLGQGESMDQALSEMNMVVEGIYTTKSVYHLAKEKNVDMPITNALYRVLFENISVKECVKDLMERDKKSE</sequence>
<organism>
    <name type="scientific">Staphylococcus aureus (strain MW2)</name>
    <dbReference type="NCBI Taxonomy" id="196620"/>
    <lineage>
        <taxon>Bacteria</taxon>
        <taxon>Bacillati</taxon>
        <taxon>Bacillota</taxon>
        <taxon>Bacilli</taxon>
        <taxon>Bacillales</taxon>
        <taxon>Staphylococcaceae</taxon>
        <taxon>Staphylococcus</taxon>
    </lineage>
</organism>
<name>GPDA_STAAW</name>
<dbReference type="EC" id="1.1.1.94" evidence="1"/>
<dbReference type="EMBL" id="BA000033">
    <property type="protein sequence ID" value="BAB95228.1"/>
    <property type="molecule type" value="Genomic_DNA"/>
</dbReference>
<dbReference type="RefSeq" id="WP_000161738.1">
    <property type="nucleotide sequence ID" value="NC_003923.1"/>
</dbReference>
<dbReference type="SMR" id="Q8NWM9"/>
<dbReference type="KEGG" id="sam:MW1363"/>
<dbReference type="HOGENOM" id="CLU_033449_0_2_9"/>
<dbReference type="UniPathway" id="UPA00940"/>
<dbReference type="GO" id="GO:0005829">
    <property type="term" value="C:cytosol"/>
    <property type="evidence" value="ECO:0007669"/>
    <property type="project" value="TreeGrafter"/>
</dbReference>
<dbReference type="GO" id="GO:0047952">
    <property type="term" value="F:glycerol-3-phosphate dehydrogenase [NAD(P)+] activity"/>
    <property type="evidence" value="ECO:0007669"/>
    <property type="project" value="UniProtKB-UniRule"/>
</dbReference>
<dbReference type="GO" id="GO:0051287">
    <property type="term" value="F:NAD binding"/>
    <property type="evidence" value="ECO:0007669"/>
    <property type="project" value="InterPro"/>
</dbReference>
<dbReference type="GO" id="GO:0005975">
    <property type="term" value="P:carbohydrate metabolic process"/>
    <property type="evidence" value="ECO:0007669"/>
    <property type="project" value="InterPro"/>
</dbReference>
<dbReference type="GO" id="GO:0046167">
    <property type="term" value="P:glycerol-3-phosphate biosynthetic process"/>
    <property type="evidence" value="ECO:0007669"/>
    <property type="project" value="UniProtKB-UniRule"/>
</dbReference>
<dbReference type="GO" id="GO:0046168">
    <property type="term" value="P:glycerol-3-phosphate catabolic process"/>
    <property type="evidence" value="ECO:0007669"/>
    <property type="project" value="InterPro"/>
</dbReference>
<dbReference type="GO" id="GO:0006650">
    <property type="term" value="P:glycerophospholipid metabolic process"/>
    <property type="evidence" value="ECO:0007669"/>
    <property type="project" value="UniProtKB-UniRule"/>
</dbReference>
<dbReference type="GO" id="GO:0008654">
    <property type="term" value="P:phospholipid biosynthetic process"/>
    <property type="evidence" value="ECO:0007669"/>
    <property type="project" value="UniProtKB-KW"/>
</dbReference>
<dbReference type="FunFam" id="1.10.1040.10:FF:000001">
    <property type="entry name" value="Glycerol-3-phosphate dehydrogenase [NAD(P)+]"/>
    <property type="match status" value="1"/>
</dbReference>
<dbReference type="FunFam" id="3.40.50.720:FF:000019">
    <property type="entry name" value="Glycerol-3-phosphate dehydrogenase [NAD(P)+]"/>
    <property type="match status" value="1"/>
</dbReference>
<dbReference type="Gene3D" id="1.10.1040.10">
    <property type="entry name" value="N-(1-d-carboxylethyl)-l-norvaline Dehydrogenase, domain 2"/>
    <property type="match status" value="1"/>
</dbReference>
<dbReference type="Gene3D" id="3.40.50.720">
    <property type="entry name" value="NAD(P)-binding Rossmann-like Domain"/>
    <property type="match status" value="1"/>
</dbReference>
<dbReference type="HAMAP" id="MF_00394">
    <property type="entry name" value="NAD_Glyc3P_dehydrog"/>
    <property type="match status" value="1"/>
</dbReference>
<dbReference type="InterPro" id="IPR008927">
    <property type="entry name" value="6-PGluconate_DH-like_C_sf"/>
</dbReference>
<dbReference type="InterPro" id="IPR013328">
    <property type="entry name" value="6PGD_dom2"/>
</dbReference>
<dbReference type="InterPro" id="IPR006168">
    <property type="entry name" value="G3P_DH_NAD-dep"/>
</dbReference>
<dbReference type="InterPro" id="IPR006109">
    <property type="entry name" value="G3P_DH_NAD-dep_C"/>
</dbReference>
<dbReference type="InterPro" id="IPR011128">
    <property type="entry name" value="G3P_DH_NAD-dep_N"/>
</dbReference>
<dbReference type="InterPro" id="IPR036291">
    <property type="entry name" value="NAD(P)-bd_dom_sf"/>
</dbReference>
<dbReference type="NCBIfam" id="NF000940">
    <property type="entry name" value="PRK00094.1-2"/>
    <property type="match status" value="1"/>
</dbReference>
<dbReference type="NCBIfam" id="NF000941">
    <property type="entry name" value="PRK00094.1-3"/>
    <property type="match status" value="1"/>
</dbReference>
<dbReference type="NCBIfam" id="NF000942">
    <property type="entry name" value="PRK00094.1-4"/>
    <property type="match status" value="1"/>
</dbReference>
<dbReference type="PANTHER" id="PTHR11728">
    <property type="entry name" value="GLYCEROL-3-PHOSPHATE DEHYDROGENASE"/>
    <property type="match status" value="1"/>
</dbReference>
<dbReference type="PANTHER" id="PTHR11728:SF1">
    <property type="entry name" value="GLYCEROL-3-PHOSPHATE DEHYDROGENASE [NAD(+)] 2, CHLOROPLASTIC"/>
    <property type="match status" value="1"/>
</dbReference>
<dbReference type="Pfam" id="PF07479">
    <property type="entry name" value="NAD_Gly3P_dh_C"/>
    <property type="match status" value="1"/>
</dbReference>
<dbReference type="Pfam" id="PF01210">
    <property type="entry name" value="NAD_Gly3P_dh_N"/>
    <property type="match status" value="1"/>
</dbReference>
<dbReference type="PIRSF" id="PIRSF000114">
    <property type="entry name" value="Glycerol-3-P_dh"/>
    <property type="match status" value="1"/>
</dbReference>
<dbReference type="PRINTS" id="PR00077">
    <property type="entry name" value="GPDHDRGNASE"/>
</dbReference>
<dbReference type="SUPFAM" id="SSF48179">
    <property type="entry name" value="6-phosphogluconate dehydrogenase C-terminal domain-like"/>
    <property type="match status" value="1"/>
</dbReference>
<dbReference type="SUPFAM" id="SSF51735">
    <property type="entry name" value="NAD(P)-binding Rossmann-fold domains"/>
    <property type="match status" value="1"/>
</dbReference>
<dbReference type="PROSITE" id="PS00957">
    <property type="entry name" value="NAD_G3PDH"/>
    <property type="match status" value="1"/>
</dbReference>